<name>PA2A2_ASPSC</name>
<organism>
    <name type="scientific">Aspidelaps scutatus</name>
    <name type="common">Shield-nose snake</name>
    <dbReference type="NCBI Taxonomy" id="8607"/>
    <lineage>
        <taxon>Eukaryota</taxon>
        <taxon>Metazoa</taxon>
        <taxon>Chordata</taxon>
        <taxon>Craniata</taxon>
        <taxon>Vertebrata</taxon>
        <taxon>Euteleostomi</taxon>
        <taxon>Lepidosauria</taxon>
        <taxon>Squamata</taxon>
        <taxon>Bifurcata</taxon>
        <taxon>Unidentata</taxon>
        <taxon>Episquamata</taxon>
        <taxon>Toxicofera</taxon>
        <taxon>Serpentes</taxon>
        <taxon>Colubroidea</taxon>
        <taxon>Elapidae</taxon>
        <taxon>Elapidae incertae sedis</taxon>
        <taxon>Aspidelaps</taxon>
    </lineage>
</organism>
<comment type="function">
    <text evidence="1">PLA2 catalyzes the calcium-dependent hydrolysis of the 2-acyl groups in 3-sn-phosphoglycerides.</text>
</comment>
<comment type="catalytic activity">
    <reaction evidence="2 3">
        <text>a 1,2-diacyl-sn-glycero-3-phosphocholine + H2O = a 1-acyl-sn-glycero-3-phosphocholine + a fatty acid + H(+)</text>
        <dbReference type="Rhea" id="RHEA:15801"/>
        <dbReference type="ChEBI" id="CHEBI:15377"/>
        <dbReference type="ChEBI" id="CHEBI:15378"/>
        <dbReference type="ChEBI" id="CHEBI:28868"/>
        <dbReference type="ChEBI" id="CHEBI:57643"/>
        <dbReference type="ChEBI" id="CHEBI:58168"/>
        <dbReference type="EC" id="3.1.1.4"/>
    </reaction>
</comment>
<comment type="cofactor">
    <cofactor evidence="1">
        <name>Ca(2+)</name>
        <dbReference type="ChEBI" id="CHEBI:29108"/>
    </cofactor>
    <text evidence="1">Binds 1 Ca(2+) ion.</text>
</comment>
<comment type="subcellular location">
    <subcellularLocation>
        <location>Secreted</location>
    </subcellularLocation>
</comment>
<comment type="tissue specificity">
    <text>Expressed by the venom gland.</text>
</comment>
<comment type="similarity">
    <text evidence="4">Belongs to the phospholipase A2 family. Group I subfamily. D49 sub-subfamily.</text>
</comment>
<protein>
    <recommendedName>
        <fullName>Acidic phospholipase A2 CM-II</fullName>
        <shortName>svPLA2</shortName>
        <ecNumber>3.1.1.4</ecNumber>
    </recommendedName>
    <alternativeName>
        <fullName>Phosphatidylcholine 2-acylhydrolase</fullName>
    </alternativeName>
</protein>
<accession>P07037</accession>
<proteinExistence type="evidence at protein level"/>
<sequence>NLYQFKNMIQCTVPNRSWWHFADYGCFCGYGGSGTPVDELDRCCQTHDNCYSEAEKLSGCKPYIKTYSYDCSQGKLTCSGNDDKCAAFVCNCDRVAAICFAGAPYIDDNYNVDLNERCQ</sequence>
<reference key="1">
    <citation type="journal article" date="1987" name="Biol. Chem. Hoppe-Seyler">
        <title>Purification, some properties of two phospholipases A2 (CM-I and CM-II) and the amino-acid sequence of CM-II from Aspidelaps scutatus (shield or shield-nose) venom.</title>
        <authorList>
            <person name="Joubert F.J."/>
        </authorList>
    </citation>
    <scope>PROTEIN SEQUENCE</scope>
    <source>
        <tissue>Venom</tissue>
    </source>
</reference>
<dbReference type="EC" id="3.1.1.4"/>
<dbReference type="PIR" id="S00227">
    <property type="entry name" value="S00227"/>
</dbReference>
<dbReference type="SMR" id="P07037"/>
<dbReference type="GO" id="GO:0005576">
    <property type="term" value="C:extracellular region"/>
    <property type="evidence" value="ECO:0007669"/>
    <property type="project" value="UniProtKB-SubCell"/>
</dbReference>
<dbReference type="GO" id="GO:0005509">
    <property type="term" value="F:calcium ion binding"/>
    <property type="evidence" value="ECO:0007669"/>
    <property type="project" value="InterPro"/>
</dbReference>
<dbReference type="GO" id="GO:0047498">
    <property type="term" value="F:calcium-dependent phospholipase A2 activity"/>
    <property type="evidence" value="ECO:0007669"/>
    <property type="project" value="TreeGrafter"/>
</dbReference>
<dbReference type="GO" id="GO:0005543">
    <property type="term" value="F:phospholipid binding"/>
    <property type="evidence" value="ECO:0007669"/>
    <property type="project" value="TreeGrafter"/>
</dbReference>
<dbReference type="GO" id="GO:0005102">
    <property type="term" value="F:signaling receptor binding"/>
    <property type="evidence" value="ECO:0007669"/>
    <property type="project" value="TreeGrafter"/>
</dbReference>
<dbReference type="GO" id="GO:0050482">
    <property type="term" value="P:arachidonate secretion"/>
    <property type="evidence" value="ECO:0007669"/>
    <property type="project" value="InterPro"/>
</dbReference>
<dbReference type="GO" id="GO:0006633">
    <property type="term" value="P:fatty acid biosynthetic process"/>
    <property type="evidence" value="ECO:0007669"/>
    <property type="project" value="TreeGrafter"/>
</dbReference>
<dbReference type="GO" id="GO:0016042">
    <property type="term" value="P:lipid catabolic process"/>
    <property type="evidence" value="ECO:0007669"/>
    <property type="project" value="UniProtKB-KW"/>
</dbReference>
<dbReference type="GO" id="GO:0006644">
    <property type="term" value="P:phospholipid metabolic process"/>
    <property type="evidence" value="ECO:0007669"/>
    <property type="project" value="InterPro"/>
</dbReference>
<dbReference type="GO" id="GO:0048146">
    <property type="term" value="P:positive regulation of fibroblast proliferation"/>
    <property type="evidence" value="ECO:0007669"/>
    <property type="project" value="TreeGrafter"/>
</dbReference>
<dbReference type="CDD" id="cd00125">
    <property type="entry name" value="PLA2c"/>
    <property type="match status" value="1"/>
</dbReference>
<dbReference type="FunFam" id="1.20.90.10:FF:000007">
    <property type="entry name" value="Acidic phospholipase A2"/>
    <property type="match status" value="1"/>
</dbReference>
<dbReference type="Gene3D" id="1.20.90.10">
    <property type="entry name" value="Phospholipase A2 domain"/>
    <property type="match status" value="1"/>
</dbReference>
<dbReference type="InterPro" id="IPR001211">
    <property type="entry name" value="PLipase_A2"/>
</dbReference>
<dbReference type="InterPro" id="IPR033112">
    <property type="entry name" value="PLipase_A2_Asp_AS"/>
</dbReference>
<dbReference type="InterPro" id="IPR016090">
    <property type="entry name" value="PLipase_A2_dom"/>
</dbReference>
<dbReference type="InterPro" id="IPR036444">
    <property type="entry name" value="PLipase_A2_dom_sf"/>
</dbReference>
<dbReference type="InterPro" id="IPR033113">
    <property type="entry name" value="PLipase_A2_His_AS"/>
</dbReference>
<dbReference type="PANTHER" id="PTHR11716:SF94">
    <property type="entry name" value="PHOSPHOLIPASE A2"/>
    <property type="match status" value="1"/>
</dbReference>
<dbReference type="PANTHER" id="PTHR11716">
    <property type="entry name" value="PHOSPHOLIPASE A2 FAMILY MEMBER"/>
    <property type="match status" value="1"/>
</dbReference>
<dbReference type="Pfam" id="PF00068">
    <property type="entry name" value="Phospholip_A2_1"/>
    <property type="match status" value="1"/>
</dbReference>
<dbReference type="PRINTS" id="PR00389">
    <property type="entry name" value="PHPHLIPASEA2"/>
</dbReference>
<dbReference type="SMART" id="SM00085">
    <property type="entry name" value="PA2c"/>
    <property type="match status" value="1"/>
</dbReference>
<dbReference type="SUPFAM" id="SSF48619">
    <property type="entry name" value="Phospholipase A2, PLA2"/>
    <property type="match status" value="1"/>
</dbReference>
<dbReference type="PROSITE" id="PS00119">
    <property type="entry name" value="PA2_ASP"/>
    <property type="match status" value="1"/>
</dbReference>
<dbReference type="PROSITE" id="PS00118">
    <property type="entry name" value="PA2_HIS"/>
    <property type="match status" value="1"/>
</dbReference>
<keyword id="KW-0106">Calcium</keyword>
<keyword id="KW-0903">Direct protein sequencing</keyword>
<keyword id="KW-1015">Disulfide bond</keyword>
<keyword id="KW-0378">Hydrolase</keyword>
<keyword id="KW-0442">Lipid degradation</keyword>
<keyword id="KW-0443">Lipid metabolism</keyword>
<keyword id="KW-0479">Metal-binding</keyword>
<keyword id="KW-0964">Secreted</keyword>
<evidence type="ECO:0000250" key="1"/>
<evidence type="ECO:0000255" key="2">
    <source>
        <dbReference type="PROSITE-ProRule" id="PRU10035"/>
    </source>
</evidence>
<evidence type="ECO:0000255" key="3">
    <source>
        <dbReference type="PROSITE-ProRule" id="PRU10036"/>
    </source>
</evidence>
<evidence type="ECO:0000305" key="4"/>
<feature type="chain" id="PRO_0000161607" description="Acidic phospholipase A2 CM-II">
    <location>
        <begin position="1"/>
        <end position="119"/>
    </location>
</feature>
<feature type="active site" evidence="1">
    <location>
        <position position="47"/>
    </location>
</feature>
<feature type="active site" evidence="1">
    <location>
        <position position="93"/>
    </location>
</feature>
<feature type="binding site">
    <location>
        <position position="27"/>
    </location>
    <ligand>
        <name>Ca(2+)</name>
        <dbReference type="ChEBI" id="CHEBI:29108"/>
    </ligand>
</feature>
<feature type="binding site">
    <location>
        <position position="29"/>
    </location>
    <ligand>
        <name>Ca(2+)</name>
        <dbReference type="ChEBI" id="CHEBI:29108"/>
    </ligand>
</feature>
<feature type="binding site">
    <location>
        <position position="31"/>
    </location>
    <ligand>
        <name>Ca(2+)</name>
        <dbReference type="ChEBI" id="CHEBI:29108"/>
    </ligand>
</feature>
<feature type="binding site" evidence="1">
    <location>
        <position position="48"/>
    </location>
    <ligand>
        <name>Ca(2+)</name>
        <dbReference type="ChEBI" id="CHEBI:29108"/>
    </ligand>
</feature>
<feature type="disulfide bond" evidence="1">
    <location>
        <begin position="11"/>
        <end position="71"/>
    </location>
</feature>
<feature type="disulfide bond" evidence="1">
    <location>
        <begin position="26"/>
        <end position="118"/>
    </location>
</feature>
<feature type="disulfide bond" evidence="1">
    <location>
        <begin position="28"/>
        <end position="44"/>
    </location>
</feature>
<feature type="disulfide bond" evidence="1">
    <location>
        <begin position="43"/>
        <end position="99"/>
    </location>
</feature>
<feature type="disulfide bond" evidence="1">
    <location>
        <begin position="50"/>
        <end position="92"/>
    </location>
</feature>
<feature type="disulfide bond" evidence="1">
    <location>
        <begin position="60"/>
        <end position="85"/>
    </location>
</feature>
<feature type="disulfide bond" evidence="1">
    <location>
        <begin position="78"/>
        <end position="90"/>
    </location>
</feature>